<dbReference type="EC" id="2.1.1.186" evidence="1"/>
<dbReference type="EMBL" id="AL513382">
    <property type="protein sequence ID" value="CAD02806.1"/>
    <property type="molecule type" value="Genomic_DNA"/>
</dbReference>
<dbReference type="EMBL" id="AE014613">
    <property type="protein sequence ID" value="AAO70444.1"/>
    <property type="molecule type" value="Genomic_DNA"/>
</dbReference>
<dbReference type="RefSeq" id="NP_457375.1">
    <property type="nucleotide sequence ID" value="NC_003198.1"/>
</dbReference>
<dbReference type="RefSeq" id="WP_001045494.1">
    <property type="nucleotide sequence ID" value="NZ_WSUR01000005.1"/>
</dbReference>
<dbReference type="SMR" id="Q8XFI3"/>
<dbReference type="STRING" id="220341.gene:17587004"/>
<dbReference type="KEGG" id="stt:t2888"/>
<dbReference type="KEGG" id="sty:STY3120"/>
<dbReference type="PATRIC" id="fig|220341.7.peg.3175"/>
<dbReference type="eggNOG" id="COG2933">
    <property type="taxonomic scope" value="Bacteria"/>
</dbReference>
<dbReference type="HOGENOM" id="CLU_043780_0_0_6"/>
<dbReference type="OMA" id="PVDWMVC"/>
<dbReference type="OrthoDB" id="154490at2"/>
<dbReference type="Proteomes" id="UP000000541">
    <property type="component" value="Chromosome"/>
</dbReference>
<dbReference type="Proteomes" id="UP000002670">
    <property type="component" value="Chromosome"/>
</dbReference>
<dbReference type="GO" id="GO:0005737">
    <property type="term" value="C:cytoplasm"/>
    <property type="evidence" value="ECO:0007669"/>
    <property type="project" value="UniProtKB-SubCell"/>
</dbReference>
<dbReference type="GO" id="GO:0008757">
    <property type="term" value="F:S-adenosylmethionine-dependent methyltransferase activity"/>
    <property type="evidence" value="ECO:0007669"/>
    <property type="project" value="UniProtKB-UniRule"/>
</dbReference>
<dbReference type="GO" id="GO:0032259">
    <property type="term" value="P:methylation"/>
    <property type="evidence" value="ECO:0007669"/>
    <property type="project" value="UniProtKB-KW"/>
</dbReference>
<dbReference type="GO" id="GO:0006364">
    <property type="term" value="P:rRNA processing"/>
    <property type="evidence" value="ECO:0007669"/>
    <property type="project" value="UniProtKB-UniRule"/>
</dbReference>
<dbReference type="FunFam" id="3.30.2300.20:FF:000001">
    <property type="entry name" value="Ribosomal RNA large subunit methyltransferase M"/>
    <property type="match status" value="1"/>
</dbReference>
<dbReference type="FunFam" id="3.30.70.2810:FF:000001">
    <property type="entry name" value="Ribosomal RNA large subunit methyltransferase M"/>
    <property type="match status" value="1"/>
</dbReference>
<dbReference type="FunFam" id="3.40.50.150:FF:000020">
    <property type="entry name" value="Ribosomal RNA large subunit methyltransferase M"/>
    <property type="match status" value="1"/>
</dbReference>
<dbReference type="Gene3D" id="3.30.2300.20">
    <property type="match status" value="1"/>
</dbReference>
<dbReference type="Gene3D" id="3.30.70.2810">
    <property type="match status" value="1"/>
</dbReference>
<dbReference type="Gene3D" id="3.40.50.150">
    <property type="entry name" value="Vaccinia Virus protein VP39"/>
    <property type="match status" value="1"/>
</dbReference>
<dbReference type="HAMAP" id="MF_01551">
    <property type="entry name" value="23SrRNA_methyltr_M"/>
    <property type="match status" value="1"/>
</dbReference>
<dbReference type="InterPro" id="IPR040739">
    <property type="entry name" value="RlmM_FDX"/>
</dbReference>
<dbReference type="InterPro" id="IPR048646">
    <property type="entry name" value="RlmM_THUMP-like"/>
</dbReference>
<dbReference type="InterPro" id="IPR002877">
    <property type="entry name" value="RNA_MeTrfase_FtsJ_dom"/>
</dbReference>
<dbReference type="InterPro" id="IPR011224">
    <property type="entry name" value="rRNA_MeTrfase_M"/>
</dbReference>
<dbReference type="InterPro" id="IPR029063">
    <property type="entry name" value="SAM-dependent_MTases_sf"/>
</dbReference>
<dbReference type="NCBIfam" id="NF008734">
    <property type="entry name" value="PRK11760.1"/>
    <property type="match status" value="1"/>
</dbReference>
<dbReference type="PANTHER" id="PTHR37524">
    <property type="entry name" value="RIBOSOMAL RNA LARGE SUBUNIT METHYLTRANSFERASE M"/>
    <property type="match status" value="1"/>
</dbReference>
<dbReference type="PANTHER" id="PTHR37524:SF2">
    <property type="entry name" value="RIBOSOMAL RNA METHYLTRANSFERASE FTSJ DOMAIN-CONTAINING PROTEIN"/>
    <property type="match status" value="1"/>
</dbReference>
<dbReference type="Pfam" id="PF01728">
    <property type="entry name" value="FtsJ"/>
    <property type="match status" value="1"/>
</dbReference>
<dbReference type="Pfam" id="PF18125">
    <property type="entry name" value="RlmM_FDX"/>
    <property type="match status" value="1"/>
</dbReference>
<dbReference type="Pfam" id="PF21239">
    <property type="entry name" value="RLMM_N"/>
    <property type="match status" value="1"/>
</dbReference>
<dbReference type="PIRSF" id="PIRSF028774">
    <property type="entry name" value="UCP028774"/>
    <property type="match status" value="1"/>
</dbReference>
<dbReference type="SUPFAM" id="SSF53335">
    <property type="entry name" value="S-adenosyl-L-methionine-dependent methyltransferases"/>
    <property type="match status" value="1"/>
</dbReference>
<accession>Q8XFI3</accession>
<accession>Q7AMD1</accession>
<comment type="function">
    <text evidence="1">Catalyzes the 2'-O-methylation at nucleotide C2498 in 23S rRNA.</text>
</comment>
<comment type="catalytic activity">
    <reaction evidence="1">
        <text>cytidine(2498) in 23S rRNA + S-adenosyl-L-methionine = 2'-O-methylcytidine(2498) in 23S rRNA + S-adenosyl-L-homocysteine + H(+)</text>
        <dbReference type="Rhea" id="RHEA:42788"/>
        <dbReference type="Rhea" id="RHEA-COMP:10244"/>
        <dbReference type="Rhea" id="RHEA-COMP:10245"/>
        <dbReference type="ChEBI" id="CHEBI:15378"/>
        <dbReference type="ChEBI" id="CHEBI:57856"/>
        <dbReference type="ChEBI" id="CHEBI:59789"/>
        <dbReference type="ChEBI" id="CHEBI:74495"/>
        <dbReference type="ChEBI" id="CHEBI:82748"/>
        <dbReference type="EC" id="2.1.1.186"/>
    </reaction>
</comment>
<comment type="subunit">
    <text evidence="1">Monomer.</text>
</comment>
<comment type="subcellular location">
    <subcellularLocation>
        <location evidence="1">Cytoplasm</location>
    </subcellularLocation>
</comment>
<comment type="similarity">
    <text evidence="1">Belongs to the class I-like SAM-binding methyltransferase superfamily. RNA methyltransferase RlmE family. RlmM subfamily.</text>
</comment>
<feature type="chain" id="PRO_0000070424" description="Ribosomal RNA large subunit methyltransferase M">
    <location>
        <begin position="1"/>
        <end position="366"/>
    </location>
</feature>
<feature type="active site" description="Proton acceptor" evidence="1">
    <location>
        <position position="306"/>
    </location>
</feature>
<feature type="binding site" evidence="1">
    <location>
        <position position="188"/>
    </location>
    <ligand>
        <name>S-adenosyl-L-methionine</name>
        <dbReference type="ChEBI" id="CHEBI:59789"/>
    </ligand>
</feature>
<feature type="binding site" evidence="1">
    <location>
        <begin position="221"/>
        <end position="224"/>
    </location>
    <ligand>
        <name>S-adenosyl-L-methionine</name>
        <dbReference type="ChEBI" id="CHEBI:59789"/>
    </ligand>
</feature>
<feature type="binding site" evidence="1">
    <location>
        <position position="240"/>
    </location>
    <ligand>
        <name>S-adenosyl-L-methionine</name>
        <dbReference type="ChEBI" id="CHEBI:59789"/>
    </ligand>
</feature>
<feature type="binding site" evidence="1">
    <location>
        <position position="260"/>
    </location>
    <ligand>
        <name>S-adenosyl-L-methionine</name>
        <dbReference type="ChEBI" id="CHEBI:59789"/>
    </ligand>
</feature>
<feature type="binding site" evidence="1">
    <location>
        <position position="277"/>
    </location>
    <ligand>
        <name>S-adenosyl-L-methionine</name>
        <dbReference type="ChEBI" id="CHEBI:59789"/>
    </ligand>
</feature>
<evidence type="ECO:0000255" key="1">
    <source>
        <dbReference type="HAMAP-Rule" id="MF_01551"/>
    </source>
</evidence>
<name>RLMM_SALTI</name>
<protein>
    <recommendedName>
        <fullName evidence="1">Ribosomal RNA large subunit methyltransferase M</fullName>
        <ecNumber evidence="1">2.1.1.186</ecNumber>
    </recommendedName>
    <alternativeName>
        <fullName evidence="1">23S rRNA (cytidine2498-2'-O)-methyltransferase</fullName>
    </alternativeName>
    <alternativeName>
        <fullName evidence="1">23S rRNA 2'-O-ribose methyltransferase RlmM</fullName>
    </alternativeName>
</protein>
<proteinExistence type="inferred from homology"/>
<gene>
    <name evidence="1" type="primary">rlmM</name>
    <name type="ordered locus">STY3120</name>
    <name type="ordered locus">t2888</name>
</gene>
<keyword id="KW-0963">Cytoplasm</keyword>
<keyword id="KW-0489">Methyltransferase</keyword>
<keyword id="KW-0698">rRNA processing</keyword>
<keyword id="KW-0949">S-adenosyl-L-methionine</keyword>
<keyword id="KW-0808">Transferase</keyword>
<organism>
    <name type="scientific">Salmonella typhi</name>
    <dbReference type="NCBI Taxonomy" id="90370"/>
    <lineage>
        <taxon>Bacteria</taxon>
        <taxon>Pseudomonadati</taxon>
        <taxon>Pseudomonadota</taxon>
        <taxon>Gammaproteobacteria</taxon>
        <taxon>Enterobacterales</taxon>
        <taxon>Enterobacteriaceae</taxon>
        <taxon>Salmonella</taxon>
    </lineage>
</organism>
<reference key="1">
    <citation type="journal article" date="2001" name="Nature">
        <title>Complete genome sequence of a multiple drug resistant Salmonella enterica serovar Typhi CT18.</title>
        <authorList>
            <person name="Parkhill J."/>
            <person name="Dougan G."/>
            <person name="James K.D."/>
            <person name="Thomson N.R."/>
            <person name="Pickard D."/>
            <person name="Wain J."/>
            <person name="Churcher C.M."/>
            <person name="Mungall K.L."/>
            <person name="Bentley S.D."/>
            <person name="Holden M.T.G."/>
            <person name="Sebaihia M."/>
            <person name="Baker S."/>
            <person name="Basham D."/>
            <person name="Brooks K."/>
            <person name="Chillingworth T."/>
            <person name="Connerton P."/>
            <person name="Cronin A."/>
            <person name="Davis P."/>
            <person name="Davies R.M."/>
            <person name="Dowd L."/>
            <person name="White N."/>
            <person name="Farrar J."/>
            <person name="Feltwell T."/>
            <person name="Hamlin N."/>
            <person name="Haque A."/>
            <person name="Hien T.T."/>
            <person name="Holroyd S."/>
            <person name="Jagels K."/>
            <person name="Krogh A."/>
            <person name="Larsen T.S."/>
            <person name="Leather S."/>
            <person name="Moule S."/>
            <person name="O'Gaora P."/>
            <person name="Parry C."/>
            <person name="Quail M.A."/>
            <person name="Rutherford K.M."/>
            <person name="Simmonds M."/>
            <person name="Skelton J."/>
            <person name="Stevens K."/>
            <person name="Whitehead S."/>
            <person name="Barrell B.G."/>
        </authorList>
    </citation>
    <scope>NUCLEOTIDE SEQUENCE [LARGE SCALE GENOMIC DNA]</scope>
    <source>
        <strain>CT18</strain>
    </source>
</reference>
<reference key="2">
    <citation type="journal article" date="2003" name="J. Bacteriol.">
        <title>Comparative genomics of Salmonella enterica serovar Typhi strains Ty2 and CT18.</title>
        <authorList>
            <person name="Deng W."/>
            <person name="Liou S.-R."/>
            <person name="Plunkett G. III"/>
            <person name="Mayhew G.F."/>
            <person name="Rose D.J."/>
            <person name="Burland V."/>
            <person name="Kodoyianni V."/>
            <person name="Schwartz D.C."/>
            <person name="Blattner F.R."/>
        </authorList>
    </citation>
    <scope>NUCLEOTIDE SEQUENCE [LARGE SCALE GENOMIC DNA]</scope>
    <source>
        <strain>ATCC 700931 / Ty2</strain>
    </source>
</reference>
<sequence>MNKVVLLCRPGFEKECAAEITDKAGKREIFGFARVKENAGYVIYECYQPEDGEKLISELPFSSLIFARQWFVVGELLQHLPPEDRITPIVGMLQGVVEKGGELRVEVADTNESKELMKFCRKFTVPLRAALRDAGVLTNYETPKRPVVHVFFIAPGCCYTGYSFAHNNSPFYMGIPRLKFPSDAPSRSTLKLEEALHVFIPEDEWDERLANGMYAVDLGACPGGWTYQLVKRNMWVYSVDNGPMAQSLMDTGQVTWLREDGFRYRPNRNNISWMVCDMVEKPAKVTALMAQWLVNGWCRETIFNLKLPMKKRYEEVSHNLAYLQAQLDEHGVNAQIQARQLYHDREEVTVHVRRLWAAVGGRRDER</sequence>